<protein>
    <recommendedName>
        <fullName evidence="1">Acetylglutamate kinase</fullName>
        <ecNumber evidence="1">2.7.2.8</ecNumber>
    </recommendedName>
    <alternativeName>
        <fullName evidence="1">N-acetyl-L-glutamate 5-phosphotransferase</fullName>
    </alternativeName>
    <alternativeName>
        <fullName evidence="1">NAG kinase</fullName>
        <shortName evidence="1">NAGK</shortName>
    </alternativeName>
</protein>
<organism>
    <name type="scientific">Brucella abortus (strain 2308)</name>
    <dbReference type="NCBI Taxonomy" id="359391"/>
    <lineage>
        <taxon>Bacteria</taxon>
        <taxon>Pseudomonadati</taxon>
        <taxon>Pseudomonadota</taxon>
        <taxon>Alphaproteobacteria</taxon>
        <taxon>Hyphomicrobiales</taxon>
        <taxon>Brucellaceae</taxon>
        <taxon>Brucella/Ochrobactrum group</taxon>
        <taxon>Brucella</taxon>
    </lineage>
</organism>
<accession>Q2YJR0</accession>
<reference key="1">
    <citation type="journal article" date="2005" name="Infect. Immun.">
        <title>Whole-genome analyses of speciation events in pathogenic Brucellae.</title>
        <authorList>
            <person name="Chain P.S."/>
            <person name="Comerci D.J."/>
            <person name="Tolmasky M.E."/>
            <person name="Larimer F.W."/>
            <person name="Malfatti S.A."/>
            <person name="Vergez L.M."/>
            <person name="Aguero F."/>
            <person name="Land M.L."/>
            <person name="Ugalde R.A."/>
            <person name="Garcia E."/>
        </authorList>
    </citation>
    <scope>NUCLEOTIDE SEQUENCE [LARGE SCALE GENOMIC DNA]</scope>
    <source>
        <strain>2308</strain>
    </source>
</reference>
<dbReference type="EC" id="2.7.2.8" evidence="1"/>
<dbReference type="EMBL" id="AM040265">
    <property type="protein sequence ID" value="CAJ13154.1"/>
    <property type="molecule type" value="Genomic_DNA"/>
</dbReference>
<dbReference type="RefSeq" id="WP_002965625.1">
    <property type="nucleotide sequence ID" value="NZ_KN046823.1"/>
</dbReference>
<dbReference type="SMR" id="Q2YJR0"/>
<dbReference type="STRING" id="359391.BAB2_0988"/>
<dbReference type="GeneID" id="93015191"/>
<dbReference type="KEGG" id="bmf:BAB2_0988"/>
<dbReference type="PATRIC" id="fig|359391.11.peg.675"/>
<dbReference type="HOGENOM" id="CLU_053680_0_0_5"/>
<dbReference type="UniPathway" id="UPA00068">
    <property type="reaction ID" value="UER00107"/>
</dbReference>
<dbReference type="Proteomes" id="UP000002719">
    <property type="component" value="Chromosome II"/>
</dbReference>
<dbReference type="GO" id="GO:0005737">
    <property type="term" value="C:cytoplasm"/>
    <property type="evidence" value="ECO:0007669"/>
    <property type="project" value="UniProtKB-SubCell"/>
</dbReference>
<dbReference type="GO" id="GO:0003991">
    <property type="term" value="F:acetylglutamate kinase activity"/>
    <property type="evidence" value="ECO:0007669"/>
    <property type="project" value="UniProtKB-UniRule"/>
</dbReference>
<dbReference type="GO" id="GO:0005524">
    <property type="term" value="F:ATP binding"/>
    <property type="evidence" value="ECO:0007669"/>
    <property type="project" value="UniProtKB-UniRule"/>
</dbReference>
<dbReference type="GO" id="GO:0042450">
    <property type="term" value="P:arginine biosynthetic process via ornithine"/>
    <property type="evidence" value="ECO:0007669"/>
    <property type="project" value="UniProtKB-UniRule"/>
</dbReference>
<dbReference type="GO" id="GO:0006526">
    <property type="term" value="P:L-arginine biosynthetic process"/>
    <property type="evidence" value="ECO:0007669"/>
    <property type="project" value="UniProtKB-UniPathway"/>
</dbReference>
<dbReference type="CDD" id="cd04250">
    <property type="entry name" value="AAK_NAGK-C"/>
    <property type="match status" value="1"/>
</dbReference>
<dbReference type="FunFam" id="3.40.1160.10:FF:000004">
    <property type="entry name" value="Acetylglutamate kinase"/>
    <property type="match status" value="1"/>
</dbReference>
<dbReference type="Gene3D" id="3.40.1160.10">
    <property type="entry name" value="Acetylglutamate kinase-like"/>
    <property type="match status" value="1"/>
</dbReference>
<dbReference type="HAMAP" id="MF_00082">
    <property type="entry name" value="ArgB"/>
    <property type="match status" value="1"/>
</dbReference>
<dbReference type="InterPro" id="IPR036393">
    <property type="entry name" value="AceGlu_kinase-like_sf"/>
</dbReference>
<dbReference type="InterPro" id="IPR004662">
    <property type="entry name" value="AcgluKinase_fam"/>
</dbReference>
<dbReference type="InterPro" id="IPR037528">
    <property type="entry name" value="ArgB"/>
</dbReference>
<dbReference type="InterPro" id="IPR001048">
    <property type="entry name" value="Asp/Glu/Uridylate_kinase"/>
</dbReference>
<dbReference type="InterPro" id="IPR041727">
    <property type="entry name" value="NAGK-C"/>
</dbReference>
<dbReference type="NCBIfam" id="TIGR00761">
    <property type="entry name" value="argB"/>
    <property type="match status" value="1"/>
</dbReference>
<dbReference type="PANTHER" id="PTHR23342">
    <property type="entry name" value="N-ACETYLGLUTAMATE SYNTHASE"/>
    <property type="match status" value="1"/>
</dbReference>
<dbReference type="PANTHER" id="PTHR23342:SF0">
    <property type="entry name" value="N-ACETYLGLUTAMATE SYNTHASE, MITOCHONDRIAL"/>
    <property type="match status" value="1"/>
</dbReference>
<dbReference type="Pfam" id="PF00696">
    <property type="entry name" value="AA_kinase"/>
    <property type="match status" value="1"/>
</dbReference>
<dbReference type="PIRSF" id="PIRSF000728">
    <property type="entry name" value="NAGK"/>
    <property type="match status" value="1"/>
</dbReference>
<dbReference type="SUPFAM" id="SSF53633">
    <property type="entry name" value="Carbamate kinase-like"/>
    <property type="match status" value="1"/>
</dbReference>
<evidence type="ECO:0000255" key="1">
    <source>
        <dbReference type="HAMAP-Rule" id="MF_00082"/>
    </source>
</evidence>
<feature type="chain" id="PRO_0000264685" description="Acetylglutamate kinase">
    <location>
        <begin position="1"/>
        <end position="296"/>
    </location>
</feature>
<feature type="binding site" evidence="1">
    <location>
        <begin position="67"/>
        <end position="68"/>
    </location>
    <ligand>
        <name>substrate</name>
    </ligand>
</feature>
<feature type="binding site" evidence="1">
    <location>
        <position position="89"/>
    </location>
    <ligand>
        <name>substrate</name>
    </ligand>
</feature>
<feature type="binding site" evidence="1">
    <location>
        <position position="194"/>
    </location>
    <ligand>
        <name>substrate</name>
    </ligand>
</feature>
<feature type="site" description="Transition state stabilizer" evidence="1">
    <location>
        <position position="32"/>
    </location>
</feature>
<feature type="site" description="Transition state stabilizer" evidence="1">
    <location>
        <position position="254"/>
    </location>
</feature>
<proteinExistence type="inferred from homology"/>
<comment type="function">
    <text evidence="1">Catalyzes the ATP-dependent phosphorylation of N-acetyl-L-glutamate.</text>
</comment>
<comment type="catalytic activity">
    <reaction evidence="1">
        <text>N-acetyl-L-glutamate + ATP = N-acetyl-L-glutamyl 5-phosphate + ADP</text>
        <dbReference type="Rhea" id="RHEA:14629"/>
        <dbReference type="ChEBI" id="CHEBI:30616"/>
        <dbReference type="ChEBI" id="CHEBI:44337"/>
        <dbReference type="ChEBI" id="CHEBI:57936"/>
        <dbReference type="ChEBI" id="CHEBI:456216"/>
        <dbReference type="EC" id="2.7.2.8"/>
    </reaction>
</comment>
<comment type="pathway">
    <text evidence="1">Amino-acid biosynthesis; L-arginine biosynthesis; N(2)-acetyl-L-ornithine from L-glutamate: step 2/4.</text>
</comment>
<comment type="subcellular location">
    <subcellularLocation>
        <location evidence="1">Cytoplasm</location>
    </subcellularLocation>
</comment>
<comment type="similarity">
    <text evidence="1">Belongs to the acetylglutamate kinase family. ArgB subfamily.</text>
</comment>
<gene>
    <name evidence="1" type="primary">argB</name>
    <name type="ordered locus">BAB2_0988</name>
</gene>
<sequence length="296" mass="31498">MTTLENPEMQAQLLSAALPYMQRYENKHVVVKYGGHAMGNPELGKAFARDVALLKQSGVNPIVVHGGGPQIQAMLTKLGIESRFEGGLRVTDEKTVEVVEMVLAGSINKEIVALINAEGEWAIGLCGKDGNMVFAQKAHKTVIDPDSNIEKVLDLGFVGEPAEVDRTLLDLLARSEMIPVIAPVAPGRDGHTYNINADTFAGAIAGALAATRLLFLTNVPGVLDKDKKLIKELSVADAQALIRDGTISGGMIPKVETCIDAIRRGVEGVVILNGKTPHSVLLELFTEHGAGTLIVP</sequence>
<name>ARGB_BRUA2</name>
<keyword id="KW-0028">Amino-acid biosynthesis</keyword>
<keyword id="KW-0055">Arginine biosynthesis</keyword>
<keyword id="KW-0067">ATP-binding</keyword>
<keyword id="KW-0963">Cytoplasm</keyword>
<keyword id="KW-0418">Kinase</keyword>
<keyword id="KW-0547">Nucleotide-binding</keyword>
<keyword id="KW-1185">Reference proteome</keyword>
<keyword id="KW-0808">Transferase</keyword>